<gene>
    <name type="primary">crtO</name>
    <name type="ordered locus">MW2486</name>
</gene>
<evidence type="ECO:0000250" key="1"/>
<evidence type="ECO:0000255" key="2"/>
<evidence type="ECO:0000305" key="3"/>
<sequence length="165" mass="20319">MKTMKKYIKTAFFCSMYWLIVQLNIANLGTRIPDKYFRQKYIIFKSFNFEKHGKFWNKWFYVRKWKHKILDGHQLNQNIYDQRHLMTINTDEIEKMIIETKRAELIHWISILPVIIFNKGPRLVKYINIFYAMIANVPIIIVQRYNRPRLTQLLRILKRRGERHD</sequence>
<proteinExistence type="inferred from homology"/>
<name>CRTO_STAAW</name>
<protein>
    <recommendedName>
        <fullName>Glycosyl-4,4'-diaponeurosporenoate acyltransferase</fullName>
        <ecNumber>2.3.1.-</ecNumber>
    </recommendedName>
</protein>
<feature type="signal peptide" evidence="2">
    <location>
        <begin position="1"/>
        <end position="28"/>
    </location>
</feature>
<feature type="chain" id="PRO_0000284852" description="Glycosyl-4,4'-diaponeurosporenoate acyltransferase">
    <location>
        <begin position="29"/>
        <end position="165"/>
    </location>
</feature>
<feature type="transmembrane region" description="Helical" evidence="2">
    <location>
        <begin position="126"/>
        <end position="145"/>
    </location>
</feature>
<dbReference type="EC" id="2.3.1.-"/>
<dbReference type="EMBL" id="BA000033">
    <property type="protein sequence ID" value="BAB96351.1"/>
    <property type="molecule type" value="Genomic_DNA"/>
</dbReference>
<dbReference type="KEGG" id="sam:MW2486"/>
<dbReference type="HOGENOM" id="CLU_133300_0_0_9"/>
<dbReference type="UniPathway" id="UPA00029">
    <property type="reaction ID" value="UER00560"/>
</dbReference>
<dbReference type="GO" id="GO:0005886">
    <property type="term" value="C:plasma membrane"/>
    <property type="evidence" value="ECO:0007669"/>
    <property type="project" value="UniProtKB-SubCell"/>
</dbReference>
<dbReference type="GO" id="GO:0016746">
    <property type="term" value="F:acyltransferase activity"/>
    <property type="evidence" value="ECO:0007669"/>
    <property type="project" value="UniProtKB-KW"/>
</dbReference>
<dbReference type="GO" id="GO:0016117">
    <property type="term" value="P:carotenoid biosynthetic process"/>
    <property type="evidence" value="ECO:0007669"/>
    <property type="project" value="UniProtKB-KW"/>
</dbReference>
<dbReference type="InterPro" id="IPR044021">
    <property type="entry name" value="CrtO"/>
</dbReference>
<dbReference type="Pfam" id="PF18927">
    <property type="entry name" value="CrtO"/>
    <property type="match status" value="1"/>
</dbReference>
<accession>Q8NUQ2</accession>
<reference key="1">
    <citation type="journal article" date="2002" name="Lancet">
        <title>Genome and virulence determinants of high virulence community-acquired MRSA.</title>
        <authorList>
            <person name="Baba T."/>
            <person name="Takeuchi F."/>
            <person name="Kuroda M."/>
            <person name="Yuzawa H."/>
            <person name="Aoki K."/>
            <person name="Oguchi A."/>
            <person name="Nagai Y."/>
            <person name="Iwama N."/>
            <person name="Asano K."/>
            <person name="Naimi T."/>
            <person name="Kuroda H."/>
            <person name="Cui L."/>
            <person name="Yamamoto K."/>
            <person name="Hiramatsu K."/>
        </authorList>
    </citation>
    <scope>NUCLEOTIDE SEQUENCE [LARGE SCALE GENOMIC DNA]</scope>
    <source>
        <strain>MW2</strain>
    </source>
</reference>
<comment type="function">
    <text evidence="1">Catalyzes the acylation of glycosyl-4,4'-diaponeurosporenoate, i.e. the esterification of glucose at the C6'' position with the carboxyl group of the C(15) fatty acid 12-methyltetradecanoic acid, to yield staphyloxanthin. This is the last step in the biosynthesis of this orange pigment, present in most staphylococci strains (By similarity).</text>
</comment>
<comment type="pathway">
    <text>Carotenoid biosynthesis; staphyloxanthin biosynthesis; staphyloxanthin from farnesyl diphosphate: step 5/5.</text>
</comment>
<comment type="subcellular location">
    <subcellularLocation>
        <location evidence="3">Cell membrane</location>
        <topology evidence="3">Single-pass membrane protein</topology>
    </subcellularLocation>
</comment>
<comment type="similarity">
    <text evidence="3">Belongs to the acyltransferase CrtO family.</text>
</comment>
<organism>
    <name type="scientific">Staphylococcus aureus (strain MW2)</name>
    <dbReference type="NCBI Taxonomy" id="196620"/>
    <lineage>
        <taxon>Bacteria</taxon>
        <taxon>Bacillati</taxon>
        <taxon>Bacillota</taxon>
        <taxon>Bacilli</taxon>
        <taxon>Bacillales</taxon>
        <taxon>Staphylococcaceae</taxon>
        <taxon>Staphylococcus</taxon>
    </lineage>
</organism>
<keyword id="KW-0012">Acyltransferase</keyword>
<keyword id="KW-0125">Carotenoid biosynthesis</keyword>
<keyword id="KW-1003">Cell membrane</keyword>
<keyword id="KW-0472">Membrane</keyword>
<keyword id="KW-0732">Signal</keyword>
<keyword id="KW-0808">Transferase</keyword>
<keyword id="KW-0812">Transmembrane</keyword>
<keyword id="KW-1133">Transmembrane helix</keyword>